<reference key="1">
    <citation type="journal article" date="2004" name="Nucleic Acids Res.">
        <title>Comparative analysis of the Borrelia garinii genome.</title>
        <authorList>
            <person name="Gloeckner G."/>
            <person name="Lehmann R."/>
            <person name="Romualdi A."/>
            <person name="Pradella S."/>
            <person name="Schulte-Spechtel U."/>
            <person name="Schilhabel M."/>
            <person name="Wilske B."/>
            <person name="Suehnel J."/>
            <person name="Platzer M."/>
        </authorList>
    </citation>
    <scope>NUCLEOTIDE SEQUENCE [LARGE SCALE GENOMIC DNA]</scope>
    <source>
        <strain>ATCC BAA-2496 / DSM 23469 / PBi</strain>
    </source>
</reference>
<dbReference type="EMBL" id="CP000013">
    <property type="protein sequence ID" value="AAU07045.1"/>
    <property type="molecule type" value="Genomic_DNA"/>
</dbReference>
<dbReference type="RefSeq" id="WP_004791564.1">
    <property type="nucleotide sequence ID" value="NZ_CP028872.1"/>
</dbReference>
<dbReference type="SMR" id="Q662H6"/>
<dbReference type="GeneID" id="83865658"/>
<dbReference type="KEGG" id="bga:BG0187"/>
<dbReference type="eggNOG" id="COG0292">
    <property type="taxonomic scope" value="Bacteria"/>
</dbReference>
<dbReference type="HOGENOM" id="CLU_123265_0_1_12"/>
<dbReference type="OrthoDB" id="9808966at2"/>
<dbReference type="Proteomes" id="UP000002276">
    <property type="component" value="Chromosome"/>
</dbReference>
<dbReference type="GO" id="GO:1990904">
    <property type="term" value="C:ribonucleoprotein complex"/>
    <property type="evidence" value="ECO:0007669"/>
    <property type="project" value="UniProtKB-KW"/>
</dbReference>
<dbReference type="GO" id="GO:0005840">
    <property type="term" value="C:ribosome"/>
    <property type="evidence" value="ECO:0007669"/>
    <property type="project" value="UniProtKB-KW"/>
</dbReference>
<dbReference type="GO" id="GO:0019843">
    <property type="term" value="F:rRNA binding"/>
    <property type="evidence" value="ECO:0007669"/>
    <property type="project" value="UniProtKB-UniRule"/>
</dbReference>
<dbReference type="GO" id="GO:0003735">
    <property type="term" value="F:structural constituent of ribosome"/>
    <property type="evidence" value="ECO:0007669"/>
    <property type="project" value="InterPro"/>
</dbReference>
<dbReference type="GO" id="GO:0000027">
    <property type="term" value="P:ribosomal large subunit assembly"/>
    <property type="evidence" value="ECO:0007669"/>
    <property type="project" value="UniProtKB-UniRule"/>
</dbReference>
<dbReference type="GO" id="GO:0006412">
    <property type="term" value="P:translation"/>
    <property type="evidence" value="ECO:0007669"/>
    <property type="project" value="InterPro"/>
</dbReference>
<dbReference type="CDD" id="cd07026">
    <property type="entry name" value="Ribosomal_L20"/>
    <property type="match status" value="1"/>
</dbReference>
<dbReference type="FunFam" id="1.10.1900.20:FF:000001">
    <property type="entry name" value="50S ribosomal protein L20"/>
    <property type="match status" value="1"/>
</dbReference>
<dbReference type="Gene3D" id="6.10.160.10">
    <property type="match status" value="1"/>
</dbReference>
<dbReference type="Gene3D" id="1.10.1900.20">
    <property type="entry name" value="Ribosomal protein L20"/>
    <property type="match status" value="1"/>
</dbReference>
<dbReference type="HAMAP" id="MF_00382">
    <property type="entry name" value="Ribosomal_bL20"/>
    <property type="match status" value="1"/>
</dbReference>
<dbReference type="InterPro" id="IPR005813">
    <property type="entry name" value="Ribosomal_bL20"/>
</dbReference>
<dbReference type="InterPro" id="IPR049946">
    <property type="entry name" value="RIBOSOMAL_L20_CS"/>
</dbReference>
<dbReference type="InterPro" id="IPR035566">
    <property type="entry name" value="Ribosomal_protein_bL20_C"/>
</dbReference>
<dbReference type="NCBIfam" id="TIGR01032">
    <property type="entry name" value="rplT_bact"/>
    <property type="match status" value="1"/>
</dbReference>
<dbReference type="PANTHER" id="PTHR10986">
    <property type="entry name" value="39S RIBOSOMAL PROTEIN L20"/>
    <property type="match status" value="1"/>
</dbReference>
<dbReference type="Pfam" id="PF00453">
    <property type="entry name" value="Ribosomal_L20"/>
    <property type="match status" value="1"/>
</dbReference>
<dbReference type="PRINTS" id="PR00062">
    <property type="entry name" value="RIBOSOMALL20"/>
</dbReference>
<dbReference type="SUPFAM" id="SSF74731">
    <property type="entry name" value="Ribosomal protein L20"/>
    <property type="match status" value="1"/>
</dbReference>
<dbReference type="PROSITE" id="PS00937">
    <property type="entry name" value="RIBOSOMAL_L20"/>
    <property type="match status" value="1"/>
</dbReference>
<accession>Q662H6</accession>
<evidence type="ECO:0000255" key="1">
    <source>
        <dbReference type="HAMAP-Rule" id="MF_00382"/>
    </source>
</evidence>
<evidence type="ECO:0000305" key="2"/>
<sequence length="115" mass="13456">MARAKNGTVHVARRKRILKKTKGFWGTKKSNYKKAKDTLRKGMMYATRDRKARKRDFRRLWISRISAALSDTGISYSRFIEGLLKSNIKINRKILSNLAIEDAEAFKKIVLEIRR</sequence>
<protein>
    <recommendedName>
        <fullName evidence="1">Large ribosomal subunit protein bL20</fullName>
    </recommendedName>
    <alternativeName>
        <fullName evidence="2">50S ribosomal protein L20</fullName>
    </alternativeName>
</protein>
<proteinExistence type="inferred from homology"/>
<organism>
    <name type="scientific">Borrelia garinii subsp. bavariensis (strain ATCC BAA-2496 / DSM 23469 / PBi)</name>
    <name type="common">Borreliella bavariensis</name>
    <dbReference type="NCBI Taxonomy" id="290434"/>
    <lineage>
        <taxon>Bacteria</taxon>
        <taxon>Pseudomonadati</taxon>
        <taxon>Spirochaetota</taxon>
        <taxon>Spirochaetia</taxon>
        <taxon>Spirochaetales</taxon>
        <taxon>Borreliaceae</taxon>
        <taxon>Borreliella</taxon>
    </lineage>
</organism>
<gene>
    <name evidence="1" type="primary">rplT</name>
    <name type="ordered locus">BG0187</name>
</gene>
<name>RL20_BORGP</name>
<comment type="function">
    <text evidence="1">Binds directly to 23S ribosomal RNA and is necessary for the in vitro assembly process of the 50S ribosomal subunit. It is not involved in the protein synthesizing functions of that subunit.</text>
</comment>
<comment type="similarity">
    <text evidence="1">Belongs to the bacterial ribosomal protein bL20 family.</text>
</comment>
<feature type="chain" id="PRO_0000177126" description="Large ribosomal subunit protein bL20">
    <location>
        <begin position="1"/>
        <end position="115"/>
    </location>
</feature>
<keyword id="KW-0687">Ribonucleoprotein</keyword>
<keyword id="KW-0689">Ribosomal protein</keyword>
<keyword id="KW-0694">RNA-binding</keyword>
<keyword id="KW-0699">rRNA-binding</keyword>